<reference key="1">
    <citation type="journal article" date="2018" name="Sci. Rep.">
        <title>Diversity and Functional Evolution of Terpene Synthases in Dictyostelid Social Amoebae.</title>
        <authorList>
            <person name="Chen X."/>
            <person name="Kollner T.G."/>
            <person name="Shaulsky G."/>
            <person name="Jia Q."/>
            <person name="Dickschat J.S."/>
            <person name="Gershenzon J."/>
            <person name="Chen F."/>
        </authorList>
    </citation>
    <scope>NUCLEOTIDE SEQUENCE [MRNA]</scope>
    <scope>FUNCTION</scope>
    <scope>CATALYTIC ACTIVITY</scope>
    <source>
        <strain>LB1</strain>
    </source>
</reference>
<organism>
    <name type="scientific">Acytostelium subglobosum</name>
    <name type="common">Slime mold</name>
    <dbReference type="NCBI Taxonomy" id="361139"/>
    <lineage>
        <taxon>Eukaryota</taxon>
        <taxon>Amoebozoa</taxon>
        <taxon>Evosea</taxon>
        <taxon>Eumycetozoa</taxon>
        <taxon>Dictyostelia</taxon>
        <taxon>Acytosteliales</taxon>
        <taxon>Acytosteliaceae</taxon>
        <taxon>Acytostelium</taxon>
    </lineage>
</organism>
<accession>A0A385AJM2</accession>
<protein>
    <recommendedName>
        <fullName evidence="4">Terpene synthase 1</fullName>
        <ecNumber evidence="3">4.2.3.160</ecNumber>
    </recommendedName>
</protein>
<feature type="chain" id="PRO_0000457030" description="Terpene synthase 1">
    <location>
        <begin position="1"/>
        <end position="332"/>
    </location>
</feature>
<feature type="short sequence motif" description="DDxx(x)D/E motif" evidence="1">
    <location>
        <begin position="81"/>
        <end position="86"/>
    </location>
</feature>
<feature type="short sequence motif" description="NDxxSxxxD/E motif" evidence="1">
    <location>
        <begin position="221"/>
        <end position="229"/>
    </location>
</feature>
<sequence>MSLSLNDIKFPMHWNLDPNEFSYVEYVYREGLELGVWRPDNKRDQMAHTNVVSLSRYFWPNVDFDRLVMGGELMLWFFTFDDGLDAGIYDDQKSLELVRRMDIVFMDGILPEDPTGPEKVALRLRNKCLAMCGRRKDTFNRFITSCVQWVDSIIPFNKVKVGGQSPHIELYSFLRKINIGAYPCVTLTEVMLNHHLESYIWADPRWIKMNEDIAIVVTLINDLVSYEKEVNDNAGDLNPLFFFQRQNNVDLCDSYKQMVTLIDYYVDHYVQLEQGFLRTLAKYHNPLQEQEVNFMLDHLHYLITGSRMWSMQTPRYCSPTSPFIEMRKFREA</sequence>
<keyword id="KW-0456">Lyase</keyword>
<keyword id="KW-0479">Metal-binding</keyword>
<proteinExistence type="evidence at protein level"/>
<dbReference type="EC" id="4.2.3.160" evidence="3"/>
<dbReference type="EMBL" id="MG262459">
    <property type="protein sequence ID" value="AXN72967.1"/>
    <property type="molecule type" value="mRNA"/>
</dbReference>
<dbReference type="SMR" id="A0A385AJM2"/>
<dbReference type="GO" id="GO:0046872">
    <property type="term" value="F:metal ion binding"/>
    <property type="evidence" value="ECO:0007669"/>
    <property type="project" value="UniProtKB-KW"/>
</dbReference>
<dbReference type="GO" id="GO:0010333">
    <property type="term" value="F:terpene synthase activity"/>
    <property type="evidence" value="ECO:0007669"/>
    <property type="project" value="InterPro"/>
</dbReference>
<dbReference type="GO" id="GO:0046246">
    <property type="term" value="P:terpene biosynthetic process"/>
    <property type="evidence" value="ECO:0007669"/>
    <property type="project" value="UniProtKB-ARBA"/>
</dbReference>
<dbReference type="FunFam" id="1.10.600.10:FF:000047">
    <property type="entry name" value="Terpene synthase"/>
    <property type="match status" value="1"/>
</dbReference>
<dbReference type="Gene3D" id="1.10.600.10">
    <property type="entry name" value="Farnesyl Diphosphate Synthase"/>
    <property type="match status" value="1"/>
</dbReference>
<dbReference type="InterPro" id="IPR008949">
    <property type="entry name" value="Isoprenoid_synthase_dom_sf"/>
</dbReference>
<dbReference type="InterPro" id="IPR034686">
    <property type="entry name" value="Terpene_cyclase-like_2"/>
</dbReference>
<dbReference type="PANTHER" id="PTHR35201">
    <property type="entry name" value="TERPENE SYNTHASE"/>
    <property type="match status" value="1"/>
</dbReference>
<dbReference type="PANTHER" id="PTHR35201:SF3">
    <property type="entry name" value="TERPENE SYNTHASE 2-RELATED"/>
    <property type="match status" value="1"/>
</dbReference>
<dbReference type="Pfam" id="PF19086">
    <property type="entry name" value="Terpene_syn_C_2"/>
    <property type="match status" value="1"/>
</dbReference>
<dbReference type="SUPFAM" id="SSF48576">
    <property type="entry name" value="Terpenoid synthases"/>
    <property type="match status" value="1"/>
</dbReference>
<gene>
    <name evidence="4" type="primary">TPS1</name>
</gene>
<comment type="function">
    <text evidence="3">Terpene synthase that converts its substrate farnesyl diphosphate (FPP) into the sesquiterpene protoillud-7-ene.</text>
</comment>
<comment type="catalytic activity">
    <reaction evidence="3">
        <text>(2E,6E)-farnesyl diphosphate = (2S,3R,6S,9S)-(-)-protoillud-7-ene + diphosphate</text>
        <dbReference type="Rhea" id="RHEA:53628"/>
        <dbReference type="ChEBI" id="CHEBI:33019"/>
        <dbReference type="ChEBI" id="CHEBI:137530"/>
        <dbReference type="ChEBI" id="CHEBI:175763"/>
        <dbReference type="EC" id="4.2.3.160"/>
    </reaction>
    <physiologicalReaction direction="left-to-right" evidence="3">
        <dbReference type="Rhea" id="RHEA:53629"/>
    </physiologicalReaction>
</comment>
<comment type="domain">
    <text evidence="2">Contains several highly conserved motifs that are important for catalytic activity including the aspartate-rich 'DDxx(x)D/E' motif and the 'NDxxSxxxD/E' motif, both of which are involved in complexing metal ions to coordinate the binding of the isoprenyl diphosphate substrate in the active site.</text>
</comment>
<comment type="similarity">
    <text evidence="5">Belongs to the terpene synthase family.</text>
</comment>
<evidence type="ECO:0000250" key="1">
    <source>
        <dbReference type="UniProtKB" id="Q54BE5"/>
    </source>
</evidence>
<evidence type="ECO:0000250" key="2">
    <source>
        <dbReference type="UniProtKB" id="Q55E23"/>
    </source>
</evidence>
<evidence type="ECO:0000269" key="3">
    <source>
    </source>
</evidence>
<evidence type="ECO:0000303" key="4">
    <source>
    </source>
</evidence>
<evidence type="ECO:0000305" key="5"/>
<name>TPS1_ACYSU</name>